<accession>Q1MNG0</accession>
<keyword id="KW-0067">ATP-binding</keyword>
<keyword id="KW-0173">Coenzyme A biosynthesis</keyword>
<keyword id="KW-0963">Cytoplasm</keyword>
<keyword id="KW-0418">Kinase</keyword>
<keyword id="KW-0547">Nucleotide-binding</keyword>
<keyword id="KW-0808">Transferase</keyword>
<proteinExistence type="inferred from homology"/>
<organism>
    <name type="scientific">Rhizobium johnstonii (strain DSM 114642 / LMG 32736 / 3841)</name>
    <name type="common">Rhizobium leguminosarum bv. viciae</name>
    <dbReference type="NCBI Taxonomy" id="216596"/>
    <lineage>
        <taxon>Bacteria</taxon>
        <taxon>Pseudomonadati</taxon>
        <taxon>Pseudomonadota</taxon>
        <taxon>Alphaproteobacteria</taxon>
        <taxon>Hyphomicrobiales</taxon>
        <taxon>Rhizobiaceae</taxon>
        <taxon>Rhizobium/Agrobacterium group</taxon>
        <taxon>Rhizobium</taxon>
        <taxon>Rhizobium johnstonii</taxon>
    </lineage>
</organism>
<reference key="1">
    <citation type="journal article" date="2006" name="Genome Biol.">
        <title>The genome of Rhizobium leguminosarum has recognizable core and accessory components.</title>
        <authorList>
            <person name="Young J.P.W."/>
            <person name="Crossman L.C."/>
            <person name="Johnston A.W.B."/>
            <person name="Thomson N.R."/>
            <person name="Ghazoui Z.F."/>
            <person name="Hull K.H."/>
            <person name="Wexler M."/>
            <person name="Curson A.R.J."/>
            <person name="Todd J.D."/>
            <person name="Poole P.S."/>
            <person name="Mauchline T.H."/>
            <person name="East A.K."/>
            <person name="Quail M.A."/>
            <person name="Churcher C."/>
            <person name="Arrowsmith C."/>
            <person name="Cherevach I."/>
            <person name="Chillingworth T."/>
            <person name="Clarke K."/>
            <person name="Cronin A."/>
            <person name="Davis P."/>
            <person name="Fraser A."/>
            <person name="Hance Z."/>
            <person name="Hauser H."/>
            <person name="Jagels K."/>
            <person name="Moule S."/>
            <person name="Mungall K."/>
            <person name="Norbertczak H."/>
            <person name="Rabbinowitsch E."/>
            <person name="Sanders M."/>
            <person name="Simmonds M."/>
            <person name="Whitehead S."/>
            <person name="Parkhill J."/>
        </authorList>
    </citation>
    <scope>NUCLEOTIDE SEQUENCE [LARGE SCALE GENOMIC DNA]</scope>
    <source>
        <strain>DSM 114642 / LMG 32736 / 3841</strain>
    </source>
</reference>
<evidence type="ECO:0000255" key="1">
    <source>
        <dbReference type="HAMAP-Rule" id="MF_00215"/>
    </source>
</evidence>
<name>COAA_RHIJ3</name>
<dbReference type="EC" id="2.7.1.33" evidence="1"/>
<dbReference type="EMBL" id="AM236080">
    <property type="protein sequence ID" value="CAK05528.1"/>
    <property type="molecule type" value="Genomic_DNA"/>
</dbReference>
<dbReference type="RefSeq" id="WP_003544165.1">
    <property type="nucleotide sequence ID" value="NC_008380.1"/>
</dbReference>
<dbReference type="SMR" id="Q1MNG0"/>
<dbReference type="EnsemblBacteria" id="CAK05528">
    <property type="protein sequence ID" value="CAK05528"/>
    <property type="gene ID" value="RL0040"/>
</dbReference>
<dbReference type="GeneID" id="84667546"/>
<dbReference type="KEGG" id="rle:RL0040"/>
<dbReference type="eggNOG" id="COG1072">
    <property type="taxonomic scope" value="Bacteria"/>
</dbReference>
<dbReference type="HOGENOM" id="CLU_053818_1_1_5"/>
<dbReference type="UniPathway" id="UPA00241">
    <property type="reaction ID" value="UER00352"/>
</dbReference>
<dbReference type="Proteomes" id="UP000006575">
    <property type="component" value="Chromosome"/>
</dbReference>
<dbReference type="GO" id="GO:0005737">
    <property type="term" value="C:cytoplasm"/>
    <property type="evidence" value="ECO:0007669"/>
    <property type="project" value="UniProtKB-SubCell"/>
</dbReference>
<dbReference type="GO" id="GO:0005524">
    <property type="term" value="F:ATP binding"/>
    <property type="evidence" value="ECO:0007669"/>
    <property type="project" value="UniProtKB-UniRule"/>
</dbReference>
<dbReference type="GO" id="GO:0004594">
    <property type="term" value="F:pantothenate kinase activity"/>
    <property type="evidence" value="ECO:0007669"/>
    <property type="project" value="UniProtKB-UniRule"/>
</dbReference>
<dbReference type="GO" id="GO:0015937">
    <property type="term" value="P:coenzyme A biosynthetic process"/>
    <property type="evidence" value="ECO:0007669"/>
    <property type="project" value="UniProtKB-UniRule"/>
</dbReference>
<dbReference type="CDD" id="cd02025">
    <property type="entry name" value="PanK"/>
    <property type="match status" value="1"/>
</dbReference>
<dbReference type="Gene3D" id="3.40.50.300">
    <property type="entry name" value="P-loop containing nucleotide triphosphate hydrolases"/>
    <property type="match status" value="1"/>
</dbReference>
<dbReference type="HAMAP" id="MF_00215">
    <property type="entry name" value="Pantothen_kinase_1"/>
    <property type="match status" value="1"/>
</dbReference>
<dbReference type="InterPro" id="IPR027417">
    <property type="entry name" value="P-loop_NTPase"/>
</dbReference>
<dbReference type="InterPro" id="IPR004566">
    <property type="entry name" value="PanK"/>
</dbReference>
<dbReference type="InterPro" id="IPR006083">
    <property type="entry name" value="PRK/URK"/>
</dbReference>
<dbReference type="NCBIfam" id="TIGR00554">
    <property type="entry name" value="panK_bact"/>
    <property type="match status" value="1"/>
</dbReference>
<dbReference type="PANTHER" id="PTHR10285">
    <property type="entry name" value="URIDINE KINASE"/>
    <property type="match status" value="1"/>
</dbReference>
<dbReference type="Pfam" id="PF00485">
    <property type="entry name" value="PRK"/>
    <property type="match status" value="1"/>
</dbReference>
<dbReference type="PIRSF" id="PIRSF000545">
    <property type="entry name" value="Pantothenate_kin"/>
    <property type="match status" value="1"/>
</dbReference>
<dbReference type="SUPFAM" id="SSF52540">
    <property type="entry name" value="P-loop containing nucleoside triphosphate hydrolases"/>
    <property type="match status" value="1"/>
</dbReference>
<protein>
    <recommendedName>
        <fullName evidence="1">Pantothenate kinase</fullName>
        <ecNumber evidence="1">2.7.1.33</ecNumber>
    </recommendedName>
    <alternativeName>
        <fullName evidence="1">Pantothenic acid kinase</fullName>
    </alternativeName>
</protein>
<gene>
    <name evidence="1" type="primary">coaA</name>
    <name type="ordered locus">RL0040</name>
</gene>
<feature type="chain" id="PRO_1000043240" description="Pantothenate kinase">
    <location>
        <begin position="1"/>
        <end position="331"/>
    </location>
</feature>
<feature type="binding site" evidence="1">
    <location>
        <begin position="109"/>
        <end position="116"/>
    </location>
    <ligand>
        <name>ATP</name>
        <dbReference type="ChEBI" id="CHEBI:30616"/>
    </ligand>
</feature>
<sequence length="331" mass="37776">MSIATEIIGVPETLDHFQSESYSPYHFFSSEQWAKFRADTPLTLTSDEVKRLRSMGDPIDLDEVRRIYLSLSRLLSAHVESSQMLFEQRNRFLSLSDVTKTPFVIGIAGSVAVGKSTTARILKELLGRWPSSPKVDLVTTDGFLHPNAVLQREKLMQRKGFPESYDTGAILRFLSAIKAGRPDVKAPSYSHLVYDVLPDEYKIVDRPDILIFEGINVLQSRDLPAGGKIVPMVSDFFDFSIYIDAAEDEIHNWYVTRFMRLRETAFRDPNSYFHRYASISDAEALEIAEDLWANINLKNLRQNILPTRPRADLILKKGKDHLIEQVALRKL</sequence>
<comment type="catalytic activity">
    <reaction evidence="1">
        <text>(R)-pantothenate + ATP = (R)-4'-phosphopantothenate + ADP + H(+)</text>
        <dbReference type="Rhea" id="RHEA:16373"/>
        <dbReference type="ChEBI" id="CHEBI:10986"/>
        <dbReference type="ChEBI" id="CHEBI:15378"/>
        <dbReference type="ChEBI" id="CHEBI:29032"/>
        <dbReference type="ChEBI" id="CHEBI:30616"/>
        <dbReference type="ChEBI" id="CHEBI:456216"/>
        <dbReference type="EC" id="2.7.1.33"/>
    </reaction>
</comment>
<comment type="pathway">
    <text evidence="1">Cofactor biosynthesis; coenzyme A biosynthesis; CoA from (R)-pantothenate: step 1/5.</text>
</comment>
<comment type="subcellular location">
    <subcellularLocation>
        <location evidence="1">Cytoplasm</location>
    </subcellularLocation>
</comment>
<comment type="similarity">
    <text evidence="1">Belongs to the prokaryotic pantothenate kinase family.</text>
</comment>